<protein>
    <recommendedName>
        <fullName>POU domain, class 6, transcription factor 1</fullName>
    </recommendedName>
    <alternativeName>
        <fullName>Brain-specific homeobox/POU domain protein 5</fullName>
        <shortName>Brain-5</shortName>
        <shortName>Brn-5</shortName>
    </alternativeName>
</protein>
<accession>P56223</accession>
<sequence length="301" mass="32702">MPGISSPILTNAQGQVIGALPWVVNSASVATPAPAQSLQVQAVTPQLLLNAQGQVIATLASSPLPQPVAVRKPSTPESPAKSEVQPIQPTQAVPPPAVILTSPAPALKPSASAPIPITCSETPTVSQLVSKPHTPSLDEDGINLEEIREFAKNFKIRRLSLGLTQTQVGQALTATEGPAYSQSAICRFEKLDITPKSAQKLKPVLEKWLNEAELRNQEGQQNLMEFVGGEPSKKRKRRTSFTPQAIEALNAYFEKNPLPTGQEITEIAKELNYDREVVRVWFCNRRQTLKNTSKLNVFQIP</sequence>
<evidence type="ECO:0000255" key="1">
    <source>
        <dbReference type="PROSITE-ProRule" id="PRU00108"/>
    </source>
</evidence>
<evidence type="ECO:0000255" key="2">
    <source>
        <dbReference type="PROSITE-ProRule" id="PRU00530"/>
    </source>
</evidence>
<evidence type="ECO:0000256" key="3">
    <source>
        <dbReference type="SAM" id="MobiDB-lite"/>
    </source>
</evidence>
<evidence type="ECO:0000305" key="4"/>
<gene>
    <name type="primary">Pou6f1</name>
    <name type="synonym">Brn5</name>
</gene>
<organism>
    <name type="scientific">Rattus norvegicus</name>
    <name type="common">Rat</name>
    <dbReference type="NCBI Taxonomy" id="10116"/>
    <lineage>
        <taxon>Eukaryota</taxon>
        <taxon>Metazoa</taxon>
        <taxon>Chordata</taxon>
        <taxon>Craniata</taxon>
        <taxon>Vertebrata</taxon>
        <taxon>Euteleostomi</taxon>
        <taxon>Mammalia</taxon>
        <taxon>Eutheria</taxon>
        <taxon>Euarchontoglires</taxon>
        <taxon>Glires</taxon>
        <taxon>Rodentia</taxon>
        <taxon>Myomorpha</taxon>
        <taxon>Muroidea</taxon>
        <taxon>Muridae</taxon>
        <taxon>Murinae</taxon>
        <taxon>Rattus</taxon>
    </lineage>
</organism>
<reference key="1">
    <citation type="journal article" date="1993" name="J. Biol. Chem.">
        <title>Brn-5 is a divergent POU domain factor highly expressed in layer IV of the neocortex.</title>
        <authorList>
            <person name="Andersen B."/>
            <person name="Schonemann M.D."/>
            <person name="Pearse R.V. II"/>
            <person name="Jenne K."/>
            <person name="Sugarman J."/>
            <person name="Rosenfeld M.G."/>
        </authorList>
    </citation>
    <scope>NUCLEOTIDE SEQUENCE [MRNA]</scope>
    <source>
        <strain>Fischer</strain>
        <tissue>Pituitary anterior lobe</tissue>
    </source>
</reference>
<feature type="chain" id="PRO_0000100761" description="POU domain, class 6, transcription factor 1">
    <location>
        <begin position="1"/>
        <end position="301"/>
    </location>
</feature>
<feature type="repeat" description="1">
    <location>
        <begin position="11"/>
        <end position="17"/>
    </location>
</feature>
<feature type="repeat" description="2">
    <location>
        <begin position="50"/>
        <end position="56"/>
    </location>
</feature>
<feature type="domain" description="POU-specific" evidence="2">
    <location>
        <begin position="139"/>
        <end position="213"/>
    </location>
</feature>
<feature type="DNA-binding region" description="Homeobox" evidence="1">
    <location>
        <begin position="234"/>
        <end position="293"/>
    </location>
</feature>
<feature type="region of interest" description="2 X 7 AA repeats of N-A-Q-G-Q-V-I">
    <location>
        <begin position="11"/>
        <end position="56"/>
    </location>
</feature>
<feature type="region of interest" description="Disordered" evidence="3">
    <location>
        <begin position="66"/>
        <end position="88"/>
    </location>
</feature>
<name>PO6F1_RAT</name>
<proteinExistence type="evidence at transcript level"/>
<dbReference type="EMBL" id="L23204">
    <property type="status" value="NOT_ANNOTATED_CDS"/>
    <property type="molecule type" value="mRNA"/>
</dbReference>
<dbReference type="PIR" id="A48880">
    <property type="entry name" value="A48880"/>
</dbReference>
<dbReference type="RefSeq" id="NP_001099216.1">
    <property type="nucleotide sequence ID" value="NM_001105746.1"/>
</dbReference>
<dbReference type="RefSeq" id="XP_017450058.1">
    <property type="nucleotide sequence ID" value="XM_017594569.3"/>
</dbReference>
<dbReference type="RefSeq" id="XP_017450059.1">
    <property type="nucleotide sequence ID" value="XM_017594570.1"/>
</dbReference>
<dbReference type="RefSeq" id="XP_017450060.1">
    <property type="nucleotide sequence ID" value="XM_017594571.1"/>
</dbReference>
<dbReference type="SMR" id="P56223"/>
<dbReference type="FunCoup" id="P56223">
    <property type="interactions" value="334"/>
</dbReference>
<dbReference type="STRING" id="10116.ENSRNOP00000006095"/>
<dbReference type="GlyGen" id="P56223">
    <property type="glycosylation" value="3 sites"/>
</dbReference>
<dbReference type="PhosphoSitePlus" id="P56223"/>
<dbReference type="PaxDb" id="10116-ENSRNOP00000006095"/>
<dbReference type="Ensembl" id="ENSRNOT00000006095.7">
    <property type="protein sequence ID" value="ENSRNOP00000006095.4"/>
    <property type="gene ID" value="ENSRNOG00000004595.8"/>
</dbReference>
<dbReference type="GeneID" id="116545"/>
<dbReference type="KEGG" id="rno:116545"/>
<dbReference type="UCSC" id="RGD:620615">
    <property type="organism name" value="rat"/>
</dbReference>
<dbReference type="AGR" id="RGD:620615"/>
<dbReference type="CTD" id="5463"/>
<dbReference type="RGD" id="620615">
    <property type="gene designation" value="Pou6f1"/>
</dbReference>
<dbReference type="eggNOG" id="KOG3802">
    <property type="taxonomic scope" value="Eukaryota"/>
</dbReference>
<dbReference type="GeneTree" id="ENSGT00940000160106"/>
<dbReference type="HOGENOM" id="CLU_013065_6_0_1"/>
<dbReference type="InParanoid" id="P56223"/>
<dbReference type="OMA" id="SEMQPIQ"/>
<dbReference type="PhylomeDB" id="P56223"/>
<dbReference type="PRO" id="PR:P56223"/>
<dbReference type="Proteomes" id="UP000002494">
    <property type="component" value="Chromosome 7"/>
</dbReference>
<dbReference type="Bgee" id="ENSRNOG00000004595">
    <property type="expression patterns" value="Expressed in frontal cortex and 18 other cell types or tissues"/>
</dbReference>
<dbReference type="GO" id="GO:0005634">
    <property type="term" value="C:nucleus"/>
    <property type="evidence" value="ECO:0000266"/>
    <property type="project" value="RGD"/>
</dbReference>
<dbReference type="GO" id="GO:0003677">
    <property type="term" value="F:DNA binding"/>
    <property type="evidence" value="ECO:0000314"/>
    <property type="project" value="RGD"/>
</dbReference>
<dbReference type="GO" id="GO:0000981">
    <property type="term" value="F:DNA-binding transcription factor activity, RNA polymerase II-specific"/>
    <property type="evidence" value="ECO:0000318"/>
    <property type="project" value="GO_Central"/>
</dbReference>
<dbReference type="GO" id="GO:0001227">
    <property type="term" value="F:DNA-binding transcription repressor activity, RNA polymerase II-specific"/>
    <property type="evidence" value="ECO:0000266"/>
    <property type="project" value="RGD"/>
</dbReference>
<dbReference type="GO" id="GO:0000978">
    <property type="term" value="F:RNA polymerase II cis-regulatory region sequence-specific DNA binding"/>
    <property type="evidence" value="ECO:0000318"/>
    <property type="project" value="GO_Central"/>
</dbReference>
<dbReference type="GO" id="GO:0043565">
    <property type="term" value="F:sequence-specific DNA binding"/>
    <property type="evidence" value="ECO:0000266"/>
    <property type="project" value="RGD"/>
</dbReference>
<dbReference type="GO" id="GO:1990837">
    <property type="term" value="F:sequence-specific double-stranded DNA binding"/>
    <property type="evidence" value="ECO:0000266"/>
    <property type="project" value="RGD"/>
</dbReference>
<dbReference type="GO" id="GO:0000122">
    <property type="term" value="P:negative regulation of transcription by RNA polymerase II"/>
    <property type="evidence" value="ECO:0000266"/>
    <property type="project" value="RGD"/>
</dbReference>
<dbReference type="GO" id="GO:0006357">
    <property type="term" value="P:regulation of transcription by RNA polymerase II"/>
    <property type="evidence" value="ECO:0000318"/>
    <property type="project" value="GO_Central"/>
</dbReference>
<dbReference type="CDD" id="cd00086">
    <property type="entry name" value="homeodomain"/>
    <property type="match status" value="1"/>
</dbReference>
<dbReference type="FunFam" id="1.10.10.60:FF:000051">
    <property type="entry name" value="POU domain protein"/>
    <property type="match status" value="1"/>
</dbReference>
<dbReference type="FunFam" id="1.10.260.40:FF:000013">
    <property type="entry name" value="POU domain protein"/>
    <property type="match status" value="1"/>
</dbReference>
<dbReference type="Gene3D" id="1.10.10.60">
    <property type="entry name" value="Homeodomain-like"/>
    <property type="match status" value="1"/>
</dbReference>
<dbReference type="Gene3D" id="1.10.260.40">
    <property type="entry name" value="lambda repressor-like DNA-binding domains"/>
    <property type="match status" value="1"/>
</dbReference>
<dbReference type="InterPro" id="IPR001356">
    <property type="entry name" value="HD"/>
</dbReference>
<dbReference type="InterPro" id="IPR009057">
    <property type="entry name" value="Homeodomain-like_sf"/>
</dbReference>
<dbReference type="InterPro" id="IPR010982">
    <property type="entry name" value="Lambda_DNA-bd_dom_sf"/>
</dbReference>
<dbReference type="InterPro" id="IPR013847">
    <property type="entry name" value="POU"/>
</dbReference>
<dbReference type="InterPro" id="IPR000327">
    <property type="entry name" value="POU_dom"/>
</dbReference>
<dbReference type="InterPro" id="IPR050255">
    <property type="entry name" value="POU_domain_TF"/>
</dbReference>
<dbReference type="PANTHER" id="PTHR11636">
    <property type="entry name" value="POU DOMAIN"/>
    <property type="match status" value="1"/>
</dbReference>
<dbReference type="PANTHER" id="PTHR11636:SF6">
    <property type="entry name" value="POU DOMAIN, CLASS 6, TRANSCRIPTION FACTOR 1"/>
    <property type="match status" value="1"/>
</dbReference>
<dbReference type="Pfam" id="PF00046">
    <property type="entry name" value="Homeodomain"/>
    <property type="match status" value="1"/>
</dbReference>
<dbReference type="Pfam" id="PF00157">
    <property type="entry name" value="Pou"/>
    <property type="match status" value="1"/>
</dbReference>
<dbReference type="PRINTS" id="PR00028">
    <property type="entry name" value="POUDOMAIN"/>
</dbReference>
<dbReference type="SMART" id="SM00389">
    <property type="entry name" value="HOX"/>
    <property type="match status" value="1"/>
</dbReference>
<dbReference type="SMART" id="SM00352">
    <property type="entry name" value="POU"/>
    <property type="match status" value="1"/>
</dbReference>
<dbReference type="SUPFAM" id="SSF46689">
    <property type="entry name" value="Homeodomain-like"/>
    <property type="match status" value="1"/>
</dbReference>
<dbReference type="SUPFAM" id="SSF47413">
    <property type="entry name" value="lambda repressor-like DNA-binding domains"/>
    <property type="match status" value="1"/>
</dbReference>
<dbReference type="PROSITE" id="PS50071">
    <property type="entry name" value="HOMEOBOX_2"/>
    <property type="match status" value="1"/>
</dbReference>
<dbReference type="PROSITE" id="PS00035">
    <property type="entry name" value="POU_1"/>
    <property type="match status" value="1"/>
</dbReference>
<dbReference type="PROSITE" id="PS00465">
    <property type="entry name" value="POU_2"/>
    <property type="match status" value="1"/>
</dbReference>
<dbReference type="PROSITE" id="PS51179">
    <property type="entry name" value="POU_3"/>
    <property type="match status" value="1"/>
</dbReference>
<comment type="function">
    <text>Transcription factor that binds preferentially to a variant of the octamer motif (5'-ATGATAAT-3').</text>
</comment>
<comment type="subcellular location">
    <subcellularLocation>
        <location>Nucleus</location>
    </subcellularLocation>
</comment>
<comment type="tissue specificity">
    <text>In the embryo, widely expressed, with highest levels in the developing brain and spinal cord. In the adult, mostly found in the brain, where it is diffusely expressed with the exception of an enrichment in layer IV of the neocortex. Also found in kidney, lung, heart, adrenal, skin, and placenta. Low levels in spleen, muscle, liver, anterior pituitary, testis and ovary.</text>
</comment>
<comment type="domain">
    <text>Contains two direct repeats of 7 amino acids in the N-terminus.</text>
</comment>
<comment type="similarity">
    <text evidence="4">Belongs to the POU transcription factor family. Class-6 subfamily.</text>
</comment>
<keyword id="KW-0238">DNA-binding</keyword>
<keyword id="KW-0371">Homeobox</keyword>
<keyword id="KW-0539">Nucleus</keyword>
<keyword id="KW-1185">Reference proteome</keyword>
<keyword id="KW-0677">Repeat</keyword>
<keyword id="KW-0804">Transcription</keyword>
<keyword id="KW-0805">Transcription regulation</keyword>